<keyword id="KW-0963">Cytoplasm</keyword>
<keyword id="KW-0251">Elongation factor</keyword>
<keyword id="KW-0648">Protein biosynthesis</keyword>
<keyword id="KW-1185">Reference proteome</keyword>
<accession>A1B8E8</accession>
<name>EFTS_PARDP</name>
<reference key="1">
    <citation type="submission" date="2006-12" db="EMBL/GenBank/DDBJ databases">
        <title>Complete sequence of chromosome 2 of Paracoccus denitrificans PD1222.</title>
        <authorList>
            <person name="Copeland A."/>
            <person name="Lucas S."/>
            <person name="Lapidus A."/>
            <person name="Barry K."/>
            <person name="Detter J.C."/>
            <person name="Glavina del Rio T."/>
            <person name="Hammon N."/>
            <person name="Israni S."/>
            <person name="Dalin E."/>
            <person name="Tice H."/>
            <person name="Pitluck S."/>
            <person name="Munk A.C."/>
            <person name="Brettin T."/>
            <person name="Bruce D."/>
            <person name="Han C."/>
            <person name="Tapia R."/>
            <person name="Gilna P."/>
            <person name="Schmutz J."/>
            <person name="Larimer F."/>
            <person name="Land M."/>
            <person name="Hauser L."/>
            <person name="Kyrpides N."/>
            <person name="Lykidis A."/>
            <person name="Spiro S."/>
            <person name="Richardson D.J."/>
            <person name="Moir J.W.B."/>
            <person name="Ferguson S.J."/>
            <person name="van Spanning R.J.M."/>
            <person name="Richardson P."/>
        </authorList>
    </citation>
    <scope>NUCLEOTIDE SEQUENCE [LARGE SCALE GENOMIC DNA]</scope>
    <source>
        <strain>Pd 1222</strain>
    </source>
</reference>
<organism>
    <name type="scientific">Paracoccus denitrificans (strain Pd 1222)</name>
    <dbReference type="NCBI Taxonomy" id="318586"/>
    <lineage>
        <taxon>Bacteria</taxon>
        <taxon>Pseudomonadati</taxon>
        <taxon>Pseudomonadota</taxon>
        <taxon>Alphaproteobacteria</taxon>
        <taxon>Rhodobacterales</taxon>
        <taxon>Paracoccaceae</taxon>
        <taxon>Paracoccus</taxon>
    </lineage>
</organism>
<sequence>MAITAAMVKDLRETTGAGMMDAKKALTETNGDMEAAIDWLRTKGLAKAAKKSGRVAAEGLVGVAVRAGRGVAVELNSETDFVAKNADFQQLVRDITNVALDAATDVEVLKATHLNGRPVDDVLTDAIARIGENMTLRRLHALEGDTIVSYVHNAAAEGMGKIGVLVALKGDAAKAQEIGKQIAMHIAATNPASLSEADLDPALVEREKSVLSEQARESGKPEAVIEKMIEGRMKKFFEEVTLLGQKFVINPDVTVAQAAQEAGVEVTGYARVVVGEGIEKKEEDFAAEVAKTRAGA</sequence>
<comment type="function">
    <text evidence="1">Associates with the EF-Tu.GDP complex and induces the exchange of GDP to GTP. It remains bound to the aminoacyl-tRNA.EF-Tu.GTP complex up to the GTP hydrolysis stage on the ribosome.</text>
</comment>
<comment type="subcellular location">
    <subcellularLocation>
        <location evidence="1">Cytoplasm</location>
    </subcellularLocation>
</comment>
<comment type="similarity">
    <text evidence="1">Belongs to the EF-Ts family.</text>
</comment>
<proteinExistence type="inferred from homology"/>
<feature type="chain" id="PRO_1000006142" description="Elongation factor Ts">
    <location>
        <begin position="1"/>
        <end position="296"/>
    </location>
</feature>
<feature type="region of interest" description="Involved in Mg(2+) ion dislocation from EF-Tu" evidence="1">
    <location>
        <begin position="79"/>
        <end position="82"/>
    </location>
</feature>
<gene>
    <name evidence="1" type="primary">tsf</name>
    <name type="ordered locus">Pden_3725</name>
</gene>
<evidence type="ECO:0000255" key="1">
    <source>
        <dbReference type="HAMAP-Rule" id="MF_00050"/>
    </source>
</evidence>
<protein>
    <recommendedName>
        <fullName evidence="1">Elongation factor Ts</fullName>
        <shortName evidence="1">EF-Ts</shortName>
    </recommendedName>
</protein>
<dbReference type="EMBL" id="CP000490">
    <property type="protein sequence ID" value="ABL71792.1"/>
    <property type="molecule type" value="Genomic_DNA"/>
</dbReference>
<dbReference type="RefSeq" id="WP_011749961.1">
    <property type="nucleotide sequence ID" value="NC_008687.1"/>
</dbReference>
<dbReference type="SMR" id="A1B8E8"/>
<dbReference type="STRING" id="318586.Pden_3725"/>
<dbReference type="EnsemblBacteria" id="ABL71792">
    <property type="protein sequence ID" value="ABL71792"/>
    <property type="gene ID" value="Pden_3725"/>
</dbReference>
<dbReference type="GeneID" id="93453381"/>
<dbReference type="KEGG" id="pde:Pden_3725"/>
<dbReference type="eggNOG" id="COG0264">
    <property type="taxonomic scope" value="Bacteria"/>
</dbReference>
<dbReference type="HOGENOM" id="CLU_047155_0_2_5"/>
<dbReference type="OrthoDB" id="9808348at2"/>
<dbReference type="Proteomes" id="UP000000361">
    <property type="component" value="Chromosome 2"/>
</dbReference>
<dbReference type="GO" id="GO:0005737">
    <property type="term" value="C:cytoplasm"/>
    <property type="evidence" value="ECO:0007669"/>
    <property type="project" value="UniProtKB-SubCell"/>
</dbReference>
<dbReference type="GO" id="GO:0003746">
    <property type="term" value="F:translation elongation factor activity"/>
    <property type="evidence" value="ECO:0007669"/>
    <property type="project" value="UniProtKB-UniRule"/>
</dbReference>
<dbReference type="CDD" id="cd14275">
    <property type="entry name" value="UBA_EF-Ts"/>
    <property type="match status" value="1"/>
</dbReference>
<dbReference type="FunFam" id="1.10.286.20:FF:000001">
    <property type="entry name" value="Elongation factor Ts"/>
    <property type="match status" value="1"/>
</dbReference>
<dbReference type="FunFam" id="1.10.8.10:FF:000001">
    <property type="entry name" value="Elongation factor Ts"/>
    <property type="match status" value="1"/>
</dbReference>
<dbReference type="Gene3D" id="1.10.286.20">
    <property type="match status" value="1"/>
</dbReference>
<dbReference type="Gene3D" id="1.10.8.10">
    <property type="entry name" value="DNA helicase RuvA subunit, C-terminal domain"/>
    <property type="match status" value="1"/>
</dbReference>
<dbReference type="Gene3D" id="3.30.479.20">
    <property type="entry name" value="Elongation factor Ts, dimerisation domain"/>
    <property type="match status" value="2"/>
</dbReference>
<dbReference type="HAMAP" id="MF_00050">
    <property type="entry name" value="EF_Ts"/>
    <property type="match status" value="1"/>
</dbReference>
<dbReference type="InterPro" id="IPR036402">
    <property type="entry name" value="EF-Ts_dimer_sf"/>
</dbReference>
<dbReference type="InterPro" id="IPR001816">
    <property type="entry name" value="Transl_elong_EFTs/EF1B"/>
</dbReference>
<dbReference type="InterPro" id="IPR014039">
    <property type="entry name" value="Transl_elong_EFTs/EF1B_dimer"/>
</dbReference>
<dbReference type="InterPro" id="IPR018101">
    <property type="entry name" value="Transl_elong_Ts_CS"/>
</dbReference>
<dbReference type="InterPro" id="IPR009060">
    <property type="entry name" value="UBA-like_sf"/>
</dbReference>
<dbReference type="NCBIfam" id="TIGR00116">
    <property type="entry name" value="tsf"/>
    <property type="match status" value="1"/>
</dbReference>
<dbReference type="PANTHER" id="PTHR11741">
    <property type="entry name" value="ELONGATION FACTOR TS"/>
    <property type="match status" value="1"/>
</dbReference>
<dbReference type="PANTHER" id="PTHR11741:SF0">
    <property type="entry name" value="ELONGATION FACTOR TS, MITOCHONDRIAL"/>
    <property type="match status" value="1"/>
</dbReference>
<dbReference type="Pfam" id="PF00889">
    <property type="entry name" value="EF_TS"/>
    <property type="match status" value="1"/>
</dbReference>
<dbReference type="SUPFAM" id="SSF54713">
    <property type="entry name" value="Elongation factor Ts (EF-Ts), dimerisation domain"/>
    <property type="match status" value="2"/>
</dbReference>
<dbReference type="SUPFAM" id="SSF46934">
    <property type="entry name" value="UBA-like"/>
    <property type="match status" value="1"/>
</dbReference>
<dbReference type="PROSITE" id="PS01126">
    <property type="entry name" value="EF_TS_1"/>
    <property type="match status" value="1"/>
</dbReference>
<dbReference type="PROSITE" id="PS01127">
    <property type="entry name" value="EF_TS_2"/>
    <property type="match status" value="1"/>
</dbReference>